<sequence>MDNRKMLLRQKLKINKQKSLRVTLMSTLPRDMATTIEDCSLITSPELERILDKVQKKWNFELHKNDFAIKYSEHRKEYSWEYEVINHVQQTKLPDEQVYLYLGIEDSPIFLINGNWIIENFNFLWEQINNSDLWIIDFNFKYGVLVSRYGGYLDHDPNPNEIIYAVTEWGI</sequence>
<name>YOKC_BACSU</name>
<dbReference type="EMBL" id="AL009126">
    <property type="protein sequence ID" value="CAB14082.1"/>
    <property type="molecule type" value="Genomic_DNA"/>
</dbReference>
<dbReference type="RefSeq" id="NP_390047.1">
    <property type="nucleotide sequence ID" value="NC_000964.3"/>
</dbReference>
<dbReference type="RefSeq" id="WP_004398503.1">
    <property type="nucleotide sequence ID" value="NZ_OZ025638.1"/>
</dbReference>
<dbReference type="FunCoup" id="O32004">
    <property type="interactions" value="85"/>
</dbReference>
<dbReference type="PaxDb" id="224308-BSU21640"/>
<dbReference type="EnsemblBacteria" id="CAB14082">
    <property type="protein sequence ID" value="CAB14082"/>
    <property type="gene ID" value="BSU_21640"/>
</dbReference>
<dbReference type="GeneID" id="939109"/>
<dbReference type="KEGG" id="bsu:BSU21640"/>
<dbReference type="PATRIC" id="fig|224308.179.peg.2365"/>
<dbReference type="eggNOG" id="ENOG5032UEH">
    <property type="taxonomic scope" value="Bacteria"/>
</dbReference>
<dbReference type="InParanoid" id="O32004"/>
<dbReference type="OrthoDB" id="2739879at2"/>
<dbReference type="BioCyc" id="BSUB:BSU21640-MONOMER"/>
<dbReference type="Proteomes" id="UP000001570">
    <property type="component" value="Chromosome"/>
</dbReference>
<organism>
    <name type="scientific">Bacillus subtilis (strain 168)</name>
    <dbReference type="NCBI Taxonomy" id="224308"/>
    <lineage>
        <taxon>Bacteria</taxon>
        <taxon>Bacillati</taxon>
        <taxon>Bacillota</taxon>
        <taxon>Bacilli</taxon>
        <taxon>Bacillales</taxon>
        <taxon>Bacillaceae</taxon>
        <taxon>Bacillus</taxon>
    </lineage>
</organism>
<reference key="1">
    <citation type="journal article" date="1997" name="Nature">
        <title>The complete genome sequence of the Gram-positive bacterium Bacillus subtilis.</title>
        <authorList>
            <person name="Kunst F."/>
            <person name="Ogasawara N."/>
            <person name="Moszer I."/>
            <person name="Albertini A.M."/>
            <person name="Alloni G."/>
            <person name="Azevedo V."/>
            <person name="Bertero M.G."/>
            <person name="Bessieres P."/>
            <person name="Bolotin A."/>
            <person name="Borchert S."/>
            <person name="Borriss R."/>
            <person name="Boursier L."/>
            <person name="Brans A."/>
            <person name="Braun M."/>
            <person name="Brignell S.C."/>
            <person name="Bron S."/>
            <person name="Brouillet S."/>
            <person name="Bruschi C.V."/>
            <person name="Caldwell B."/>
            <person name="Capuano V."/>
            <person name="Carter N.M."/>
            <person name="Choi S.-K."/>
            <person name="Codani J.-J."/>
            <person name="Connerton I.F."/>
            <person name="Cummings N.J."/>
            <person name="Daniel R.A."/>
            <person name="Denizot F."/>
            <person name="Devine K.M."/>
            <person name="Duesterhoeft A."/>
            <person name="Ehrlich S.D."/>
            <person name="Emmerson P.T."/>
            <person name="Entian K.-D."/>
            <person name="Errington J."/>
            <person name="Fabret C."/>
            <person name="Ferrari E."/>
            <person name="Foulger D."/>
            <person name="Fritz C."/>
            <person name="Fujita M."/>
            <person name="Fujita Y."/>
            <person name="Fuma S."/>
            <person name="Galizzi A."/>
            <person name="Galleron N."/>
            <person name="Ghim S.-Y."/>
            <person name="Glaser P."/>
            <person name="Goffeau A."/>
            <person name="Golightly E.J."/>
            <person name="Grandi G."/>
            <person name="Guiseppi G."/>
            <person name="Guy B.J."/>
            <person name="Haga K."/>
            <person name="Haiech J."/>
            <person name="Harwood C.R."/>
            <person name="Henaut A."/>
            <person name="Hilbert H."/>
            <person name="Holsappel S."/>
            <person name="Hosono S."/>
            <person name="Hullo M.-F."/>
            <person name="Itaya M."/>
            <person name="Jones L.-M."/>
            <person name="Joris B."/>
            <person name="Karamata D."/>
            <person name="Kasahara Y."/>
            <person name="Klaerr-Blanchard M."/>
            <person name="Klein C."/>
            <person name="Kobayashi Y."/>
            <person name="Koetter P."/>
            <person name="Koningstein G."/>
            <person name="Krogh S."/>
            <person name="Kumano M."/>
            <person name="Kurita K."/>
            <person name="Lapidus A."/>
            <person name="Lardinois S."/>
            <person name="Lauber J."/>
            <person name="Lazarevic V."/>
            <person name="Lee S.-M."/>
            <person name="Levine A."/>
            <person name="Liu H."/>
            <person name="Masuda S."/>
            <person name="Mauel C."/>
            <person name="Medigue C."/>
            <person name="Medina N."/>
            <person name="Mellado R.P."/>
            <person name="Mizuno M."/>
            <person name="Moestl D."/>
            <person name="Nakai S."/>
            <person name="Noback M."/>
            <person name="Noone D."/>
            <person name="O'Reilly M."/>
            <person name="Ogawa K."/>
            <person name="Ogiwara A."/>
            <person name="Oudega B."/>
            <person name="Park S.-H."/>
            <person name="Parro V."/>
            <person name="Pohl T.M."/>
            <person name="Portetelle D."/>
            <person name="Porwollik S."/>
            <person name="Prescott A.M."/>
            <person name="Presecan E."/>
            <person name="Pujic P."/>
            <person name="Purnelle B."/>
            <person name="Rapoport G."/>
            <person name="Rey M."/>
            <person name="Reynolds S."/>
            <person name="Rieger M."/>
            <person name="Rivolta C."/>
            <person name="Rocha E."/>
            <person name="Roche B."/>
            <person name="Rose M."/>
            <person name="Sadaie Y."/>
            <person name="Sato T."/>
            <person name="Scanlan E."/>
            <person name="Schleich S."/>
            <person name="Schroeter R."/>
            <person name="Scoffone F."/>
            <person name="Sekiguchi J."/>
            <person name="Sekowska A."/>
            <person name="Seror S.J."/>
            <person name="Serror P."/>
            <person name="Shin B.-S."/>
            <person name="Soldo B."/>
            <person name="Sorokin A."/>
            <person name="Tacconi E."/>
            <person name="Takagi T."/>
            <person name="Takahashi H."/>
            <person name="Takemaru K."/>
            <person name="Takeuchi M."/>
            <person name="Tamakoshi A."/>
            <person name="Tanaka T."/>
            <person name="Terpstra P."/>
            <person name="Tognoni A."/>
            <person name="Tosato V."/>
            <person name="Uchiyama S."/>
            <person name="Vandenbol M."/>
            <person name="Vannier F."/>
            <person name="Vassarotti A."/>
            <person name="Viari A."/>
            <person name="Wambutt R."/>
            <person name="Wedler E."/>
            <person name="Wedler H."/>
            <person name="Weitzenegger T."/>
            <person name="Winters P."/>
            <person name="Wipat A."/>
            <person name="Yamamoto H."/>
            <person name="Yamane K."/>
            <person name="Yasumoto K."/>
            <person name="Yata K."/>
            <person name="Yoshida K."/>
            <person name="Yoshikawa H.-F."/>
            <person name="Zumstein E."/>
            <person name="Yoshikawa H."/>
            <person name="Danchin A."/>
        </authorList>
    </citation>
    <scope>NUCLEOTIDE SEQUENCE [LARGE SCALE GENOMIC DNA]</scope>
    <source>
        <strain>168</strain>
    </source>
</reference>
<proteinExistence type="predicted"/>
<feature type="chain" id="PRO_0000359949" description="SPbeta prophage-derived uncharacterized protein YokC">
    <location>
        <begin position="1"/>
        <end position="171"/>
    </location>
</feature>
<gene>
    <name type="primary">yokC</name>
    <name type="ordered locus">BSU21640</name>
</gene>
<keyword id="KW-1185">Reference proteome</keyword>
<accession>O32004</accession>
<protein>
    <recommendedName>
        <fullName>SPbeta prophage-derived uncharacterized protein YokC</fullName>
    </recommendedName>
</protein>